<protein>
    <recommendedName>
        <fullName evidence="1">Protein translocase subunit SecE</fullName>
    </recommendedName>
</protein>
<reference key="1">
    <citation type="journal article" date="2002" name="Mol. Biol. Evol.">
        <title>Proliferation and deterioration of Rickettsia palindromic elements.</title>
        <authorList>
            <person name="Amiri H."/>
            <person name="Alsmark C.M."/>
            <person name="Andersson S.G.E."/>
        </authorList>
    </citation>
    <scope>NUCLEOTIDE SEQUENCE [GENOMIC DNA]</scope>
    <source>
        <strain>Sawtooth</strain>
    </source>
</reference>
<feature type="chain" id="PRO_0000273133" description="Protein translocase subunit SecE">
    <location>
        <begin position="1"/>
        <end position="66"/>
    </location>
</feature>
<feature type="transmembrane region" description="Helical" evidence="1">
    <location>
        <begin position="29"/>
        <end position="49"/>
    </location>
</feature>
<dbReference type="EMBL" id="AF502170">
    <property type="protein sequence ID" value="AAM90914.1"/>
    <property type="molecule type" value="Genomic_DNA"/>
</dbReference>
<dbReference type="RefSeq" id="WP_012150392.1">
    <property type="nucleotide sequence ID" value="NZ_CP151153.1"/>
</dbReference>
<dbReference type="SMR" id="Q8KTC0"/>
<dbReference type="GeneID" id="79937974"/>
<dbReference type="OMA" id="DIREVWM"/>
<dbReference type="GO" id="GO:0005886">
    <property type="term" value="C:plasma membrane"/>
    <property type="evidence" value="ECO:0007669"/>
    <property type="project" value="UniProtKB-SubCell"/>
</dbReference>
<dbReference type="GO" id="GO:0008320">
    <property type="term" value="F:protein transmembrane transporter activity"/>
    <property type="evidence" value="ECO:0007669"/>
    <property type="project" value="UniProtKB-UniRule"/>
</dbReference>
<dbReference type="GO" id="GO:0065002">
    <property type="term" value="P:intracellular protein transmembrane transport"/>
    <property type="evidence" value="ECO:0007669"/>
    <property type="project" value="UniProtKB-UniRule"/>
</dbReference>
<dbReference type="GO" id="GO:0009306">
    <property type="term" value="P:protein secretion"/>
    <property type="evidence" value="ECO:0007669"/>
    <property type="project" value="UniProtKB-UniRule"/>
</dbReference>
<dbReference type="GO" id="GO:0006605">
    <property type="term" value="P:protein targeting"/>
    <property type="evidence" value="ECO:0007669"/>
    <property type="project" value="UniProtKB-UniRule"/>
</dbReference>
<dbReference type="GO" id="GO:0043952">
    <property type="term" value="P:protein transport by the Sec complex"/>
    <property type="evidence" value="ECO:0007669"/>
    <property type="project" value="UniProtKB-UniRule"/>
</dbReference>
<dbReference type="Gene3D" id="1.20.5.1030">
    <property type="entry name" value="Preprotein translocase secy subunit"/>
    <property type="match status" value="1"/>
</dbReference>
<dbReference type="HAMAP" id="MF_00422">
    <property type="entry name" value="SecE"/>
    <property type="match status" value="1"/>
</dbReference>
<dbReference type="InterPro" id="IPR005807">
    <property type="entry name" value="SecE_bac"/>
</dbReference>
<dbReference type="InterPro" id="IPR038379">
    <property type="entry name" value="SecE_sf"/>
</dbReference>
<dbReference type="InterPro" id="IPR001901">
    <property type="entry name" value="Translocase_SecE/Sec61-g"/>
</dbReference>
<dbReference type="NCBIfam" id="TIGR00964">
    <property type="entry name" value="secE_bact"/>
    <property type="match status" value="1"/>
</dbReference>
<dbReference type="PANTHER" id="PTHR33910">
    <property type="entry name" value="PROTEIN TRANSLOCASE SUBUNIT SECE"/>
    <property type="match status" value="1"/>
</dbReference>
<dbReference type="PANTHER" id="PTHR33910:SF1">
    <property type="entry name" value="PROTEIN TRANSLOCASE SUBUNIT SECE"/>
    <property type="match status" value="1"/>
</dbReference>
<dbReference type="Pfam" id="PF00584">
    <property type="entry name" value="SecE"/>
    <property type="match status" value="1"/>
</dbReference>
<dbReference type="PROSITE" id="PS01067">
    <property type="entry name" value="SECE_SEC61G"/>
    <property type="match status" value="1"/>
</dbReference>
<evidence type="ECO:0000255" key="1">
    <source>
        <dbReference type="HAMAP-Rule" id="MF_00422"/>
    </source>
</evidence>
<accession>Q8KTC0</accession>
<gene>
    <name evidence="1" type="primary">secE</name>
</gene>
<sequence>MFKEYKIYKFFEQVKQETYKVVWPTRKELVASTLVVVVAVFIFSLTCLVLDYSIHNIMQLLLNIGK</sequence>
<name>SECE_RICRI</name>
<organism>
    <name type="scientific">Rickettsia rickettsii</name>
    <dbReference type="NCBI Taxonomy" id="783"/>
    <lineage>
        <taxon>Bacteria</taxon>
        <taxon>Pseudomonadati</taxon>
        <taxon>Pseudomonadota</taxon>
        <taxon>Alphaproteobacteria</taxon>
        <taxon>Rickettsiales</taxon>
        <taxon>Rickettsiaceae</taxon>
        <taxon>Rickettsieae</taxon>
        <taxon>Rickettsia</taxon>
        <taxon>spotted fever group</taxon>
    </lineage>
</organism>
<keyword id="KW-0997">Cell inner membrane</keyword>
<keyword id="KW-1003">Cell membrane</keyword>
<keyword id="KW-0472">Membrane</keyword>
<keyword id="KW-0653">Protein transport</keyword>
<keyword id="KW-0811">Translocation</keyword>
<keyword id="KW-0812">Transmembrane</keyword>
<keyword id="KW-1133">Transmembrane helix</keyword>
<keyword id="KW-0813">Transport</keyword>
<proteinExistence type="inferred from homology"/>
<comment type="function">
    <text evidence="1">Essential subunit of the Sec protein translocation channel SecYEG. Clamps together the 2 halves of SecY. May contact the channel plug during translocation.</text>
</comment>
<comment type="subunit">
    <text evidence="1">Component of the Sec protein translocase complex. Heterotrimer consisting of SecY, SecE and SecG subunits. The heterotrimers can form oligomers, although 1 heterotrimer is thought to be able to translocate proteins. Interacts with the ribosome. Interacts with SecDF, and other proteins may be involved. Interacts with SecA.</text>
</comment>
<comment type="subcellular location">
    <subcellularLocation>
        <location evidence="1">Cell inner membrane</location>
        <topology evidence="1">Single-pass membrane protein</topology>
    </subcellularLocation>
</comment>
<comment type="similarity">
    <text evidence="1">Belongs to the SecE/SEC61-gamma family.</text>
</comment>